<name>HUTI_HALMA</name>
<protein>
    <recommendedName>
        <fullName evidence="1">Imidazolonepropionase</fullName>
        <ecNumber evidence="1">3.5.2.7</ecNumber>
    </recommendedName>
    <alternativeName>
        <fullName evidence="1">Imidazolone-5-propionate hydrolase</fullName>
    </alternativeName>
</protein>
<accession>Q5V1C1</accession>
<gene>
    <name evidence="1" type="primary">hutI</name>
    <name type="ordered locus">rrnAC1790</name>
</gene>
<reference key="1">
    <citation type="journal article" date="2004" name="Genome Res.">
        <title>Genome sequence of Haloarcula marismortui: a halophilic archaeon from the Dead Sea.</title>
        <authorList>
            <person name="Baliga N.S."/>
            <person name="Bonneau R."/>
            <person name="Facciotti M.T."/>
            <person name="Pan M."/>
            <person name="Glusman G."/>
            <person name="Deutsch E.W."/>
            <person name="Shannon P."/>
            <person name="Chiu Y."/>
            <person name="Weng R.S."/>
            <person name="Gan R.R."/>
            <person name="Hung P."/>
            <person name="Date S.V."/>
            <person name="Marcotte E."/>
            <person name="Hood L."/>
            <person name="Ng W.V."/>
        </authorList>
    </citation>
    <scope>NUCLEOTIDE SEQUENCE [LARGE SCALE GENOMIC DNA]</scope>
    <source>
        <strain>ATCC 43049 / DSM 3752 / JCM 8966 / VKM B-1809</strain>
    </source>
</reference>
<proteinExistence type="inferred from homology"/>
<feature type="chain" id="PRO_0000306545" description="Imidazolonepropionase">
    <location>
        <begin position="1"/>
        <end position="420"/>
    </location>
</feature>
<feature type="binding site" evidence="1">
    <location>
        <position position="77"/>
    </location>
    <ligand>
        <name>Fe(3+)</name>
        <dbReference type="ChEBI" id="CHEBI:29034"/>
    </ligand>
</feature>
<feature type="binding site" evidence="1">
    <location>
        <position position="77"/>
    </location>
    <ligand>
        <name>Zn(2+)</name>
        <dbReference type="ChEBI" id="CHEBI:29105"/>
    </ligand>
</feature>
<feature type="binding site" evidence="1">
    <location>
        <position position="79"/>
    </location>
    <ligand>
        <name>Fe(3+)</name>
        <dbReference type="ChEBI" id="CHEBI:29034"/>
    </ligand>
</feature>
<feature type="binding site" evidence="1">
    <location>
        <position position="79"/>
    </location>
    <ligand>
        <name>Zn(2+)</name>
        <dbReference type="ChEBI" id="CHEBI:29105"/>
    </ligand>
</feature>
<feature type="binding site" evidence="1">
    <location>
        <position position="86"/>
    </location>
    <ligand>
        <name>4-imidazolone-5-propanoate</name>
        <dbReference type="ChEBI" id="CHEBI:77893"/>
    </ligand>
</feature>
<feature type="binding site" evidence="1">
    <location>
        <position position="149"/>
    </location>
    <ligand>
        <name>4-imidazolone-5-propanoate</name>
        <dbReference type="ChEBI" id="CHEBI:77893"/>
    </ligand>
</feature>
<feature type="binding site" evidence="1">
    <location>
        <position position="149"/>
    </location>
    <ligand>
        <name>N-formimidoyl-L-glutamate</name>
        <dbReference type="ChEBI" id="CHEBI:58928"/>
    </ligand>
</feature>
<feature type="binding site" evidence="1">
    <location>
        <position position="182"/>
    </location>
    <ligand>
        <name>4-imidazolone-5-propanoate</name>
        <dbReference type="ChEBI" id="CHEBI:77893"/>
    </ligand>
</feature>
<feature type="binding site" evidence="1">
    <location>
        <position position="245"/>
    </location>
    <ligand>
        <name>Fe(3+)</name>
        <dbReference type="ChEBI" id="CHEBI:29034"/>
    </ligand>
</feature>
<feature type="binding site" evidence="1">
    <location>
        <position position="245"/>
    </location>
    <ligand>
        <name>Zn(2+)</name>
        <dbReference type="ChEBI" id="CHEBI:29105"/>
    </ligand>
</feature>
<feature type="binding site" evidence="1">
    <location>
        <position position="248"/>
    </location>
    <ligand>
        <name>4-imidazolone-5-propanoate</name>
        <dbReference type="ChEBI" id="CHEBI:77893"/>
    </ligand>
</feature>
<feature type="binding site" evidence="1">
    <location>
        <position position="319"/>
    </location>
    <ligand>
        <name>Fe(3+)</name>
        <dbReference type="ChEBI" id="CHEBI:29034"/>
    </ligand>
</feature>
<feature type="binding site" evidence="1">
    <location>
        <position position="319"/>
    </location>
    <ligand>
        <name>Zn(2+)</name>
        <dbReference type="ChEBI" id="CHEBI:29105"/>
    </ligand>
</feature>
<feature type="binding site" evidence="1">
    <location>
        <position position="321"/>
    </location>
    <ligand>
        <name>N-formimidoyl-L-glutamate</name>
        <dbReference type="ChEBI" id="CHEBI:58928"/>
    </ligand>
</feature>
<organism>
    <name type="scientific">Haloarcula marismortui (strain ATCC 43049 / DSM 3752 / JCM 8966 / VKM B-1809)</name>
    <name type="common">Halobacterium marismortui</name>
    <dbReference type="NCBI Taxonomy" id="272569"/>
    <lineage>
        <taxon>Archaea</taxon>
        <taxon>Methanobacteriati</taxon>
        <taxon>Methanobacteriota</taxon>
        <taxon>Stenosarchaea group</taxon>
        <taxon>Halobacteria</taxon>
        <taxon>Halobacteriales</taxon>
        <taxon>Haloarculaceae</taxon>
        <taxon>Haloarcula</taxon>
    </lineage>
</organism>
<comment type="function">
    <text evidence="1">Catalyzes the hydrolytic cleavage of the carbon-nitrogen bond in imidazolone-5-propanoate to yield N-formimidoyl-L-glutamate. It is the third step in the universal histidine degradation pathway.</text>
</comment>
<comment type="catalytic activity">
    <reaction evidence="1">
        <text>4-imidazolone-5-propanoate + H2O = N-formimidoyl-L-glutamate</text>
        <dbReference type="Rhea" id="RHEA:23660"/>
        <dbReference type="ChEBI" id="CHEBI:15377"/>
        <dbReference type="ChEBI" id="CHEBI:58928"/>
        <dbReference type="ChEBI" id="CHEBI:77893"/>
        <dbReference type="EC" id="3.5.2.7"/>
    </reaction>
</comment>
<comment type="cofactor">
    <cofactor evidence="1">
        <name>Zn(2+)</name>
        <dbReference type="ChEBI" id="CHEBI:29105"/>
    </cofactor>
    <cofactor evidence="1">
        <name>Fe(3+)</name>
        <dbReference type="ChEBI" id="CHEBI:29034"/>
    </cofactor>
    <text evidence="1">Binds 1 zinc or iron ion per subunit.</text>
</comment>
<comment type="pathway">
    <text evidence="1">Amino-acid degradation; L-histidine degradation into L-glutamate; N-formimidoyl-L-glutamate from L-histidine: step 3/3.</text>
</comment>
<comment type="subcellular location">
    <subcellularLocation>
        <location evidence="1">Cytoplasm</location>
    </subcellularLocation>
</comment>
<comment type="similarity">
    <text evidence="1">Belongs to the metallo-dependent hydrolases superfamily. HutI family.</text>
</comment>
<sequence>MTTLDAVVYGADELVAGPATDGRRLETYEDGAVAIVDGTVAAVGPTTEVTAEYPPESANHAVDADGQAVIPGFVDPHTHALFAGDRSDEFAAKLRGKSYQDILAEGGGILRTVRAVRDADEETLLSNLLAHLDTMLAHGTTTVEVKSGYGLDTETELQMLRVIDSADAVHPVDVVPTFMGAHAVPEGWDTDDYTAAVVDEQVPAVESQGIAEFCDVFCEEGVFSVAQSRRVLEAGAAAGLTPKVHAEELAHIGGTQLAADVGAASADHLLHATGEDIDALVDAAVTPVLLPGTAFGLGAAYADATAFRDRGAPVAVATDFNPNCHSHSMGFALSLACVEMGLTPAEALIAGTKHAALALDRTDGLGTLREGAPGDAVVLAAPSHVHIPYQYGTNVVDAILKDGSVVSTPTHESYDREVQP</sequence>
<keyword id="KW-0963">Cytoplasm</keyword>
<keyword id="KW-0369">Histidine metabolism</keyword>
<keyword id="KW-0378">Hydrolase</keyword>
<keyword id="KW-0408">Iron</keyword>
<keyword id="KW-0479">Metal-binding</keyword>
<keyword id="KW-1185">Reference proteome</keyword>
<keyword id="KW-0862">Zinc</keyword>
<evidence type="ECO:0000255" key="1">
    <source>
        <dbReference type="HAMAP-Rule" id="MF_00372"/>
    </source>
</evidence>
<dbReference type="EC" id="3.5.2.7" evidence="1"/>
<dbReference type="EMBL" id="AY596297">
    <property type="protein sequence ID" value="AAV46682.1"/>
    <property type="molecule type" value="Genomic_DNA"/>
</dbReference>
<dbReference type="RefSeq" id="WP_011223845.1">
    <property type="nucleotide sequence ID" value="NC_006396.1"/>
</dbReference>
<dbReference type="SMR" id="Q5V1C1"/>
<dbReference type="STRING" id="272569.rrnAC1790"/>
<dbReference type="PaxDb" id="272569-rrnAC1790"/>
<dbReference type="EnsemblBacteria" id="AAV46682">
    <property type="protein sequence ID" value="AAV46682"/>
    <property type="gene ID" value="rrnAC1790"/>
</dbReference>
<dbReference type="GeneID" id="40152735"/>
<dbReference type="KEGG" id="hma:rrnAC1790"/>
<dbReference type="PATRIC" id="fig|272569.17.peg.2463"/>
<dbReference type="eggNOG" id="arCOG00696">
    <property type="taxonomic scope" value="Archaea"/>
</dbReference>
<dbReference type="HOGENOM" id="CLU_041647_0_1_2"/>
<dbReference type="UniPathway" id="UPA00379">
    <property type="reaction ID" value="UER00551"/>
</dbReference>
<dbReference type="Proteomes" id="UP000001169">
    <property type="component" value="Chromosome I"/>
</dbReference>
<dbReference type="GO" id="GO:0005737">
    <property type="term" value="C:cytoplasm"/>
    <property type="evidence" value="ECO:0007669"/>
    <property type="project" value="UniProtKB-SubCell"/>
</dbReference>
<dbReference type="GO" id="GO:0050480">
    <property type="term" value="F:imidazolonepropionase activity"/>
    <property type="evidence" value="ECO:0007669"/>
    <property type="project" value="UniProtKB-UniRule"/>
</dbReference>
<dbReference type="GO" id="GO:0005506">
    <property type="term" value="F:iron ion binding"/>
    <property type="evidence" value="ECO:0007669"/>
    <property type="project" value="UniProtKB-UniRule"/>
</dbReference>
<dbReference type="GO" id="GO:0008270">
    <property type="term" value="F:zinc ion binding"/>
    <property type="evidence" value="ECO:0007669"/>
    <property type="project" value="UniProtKB-UniRule"/>
</dbReference>
<dbReference type="GO" id="GO:0019556">
    <property type="term" value="P:L-histidine catabolic process to glutamate and formamide"/>
    <property type="evidence" value="ECO:0007669"/>
    <property type="project" value="UniProtKB-UniPathway"/>
</dbReference>
<dbReference type="GO" id="GO:0019557">
    <property type="term" value="P:L-histidine catabolic process to glutamate and formate"/>
    <property type="evidence" value="ECO:0007669"/>
    <property type="project" value="UniProtKB-UniPathway"/>
</dbReference>
<dbReference type="CDD" id="cd01296">
    <property type="entry name" value="Imidazolone-5PH"/>
    <property type="match status" value="1"/>
</dbReference>
<dbReference type="FunFam" id="3.20.20.140:FF:000007">
    <property type="entry name" value="Imidazolonepropionase"/>
    <property type="match status" value="1"/>
</dbReference>
<dbReference type="Gene3D" id="3.20.20.140">
    <property type="entry name" value="Metal-dependent hydrolases"/>
    <property type="match status" value="1"/>
</dbReference>
<dbReference type="Gene3D" id="2.30.40.10">
    <property type="entry name" value="Urease, subunit C, domain 1"/>
    <property type="match status" value="1"/>
</dbReference>
<dbReference type="HAMAP" id="MF_00372">
    <property type="entry name" value="HutI"/>
    <property type="match status" value="1"/>
</dbReference>
<dbReference type="InterPro" id="IPR006680">
    <property type="entry name" value="Amidohydro-rel"/>
</dbReference>
<dbReference type="InterPro" id="IPR005920">
    <property type="entry name" value="HutI"/>
</dbReference>
<dbReference type="InterPro" id="IPR011059">
    <property type="entry name" value="Metal-dep_hydrolase_composite"/>
</dbReference>
<dbReference type="InterPro" id="IPR032466">
    <property type="entry name" value="Metal_Hydrolase"/>
</dbReference>
<dbReference type="InterPro" id="IPR054418">
    <property type="entry name" value="MQNX/HUTI_composite_N"/>
</dbReference>
<dbReference type="NCBIfam" id="TIGR01224">
    <property type="entry name" value="hutI"/>
    <property type="match status" value="1"/>
</dbReference>
<dbReference type="PANTHER" id="PTHR42752">
    <property type="entry name" value="IMIDAZOLONEPROPIONASE"/>
    <property type="match status" value="1"/>
</dbReference>
<dbReference type="PANTHER" id="PTHR42752:SF1">
    <property type="entry name" value="IMIDAZOLONEPROPIONASE-RELATED"/>
    <property type="match status" value="1"/>
</dbReference>
<dbReference type="Pfam" id="PF01979">
    <property type="entry name" value="Amidohydro_1"/>
    <property type="match status" value="1"/>
</dbReference>
<dbReference type="Pfam" id="PF22039">
    <property type="entry name" value="HUTI_composite_bact"/>
    <property type="match status" value="1"/>
</dbReference>
<dbReference type="SUPFAM" id="SSF51338">
    <property type="entry name" value="Composite domain of metallo-dependent hydrolases"/>
    <property type="match status" value="1"/>
</dbReference>
<dbReference type="SUPFAM" id="SSF51556">
    <property type="entry name" value="Metallo-dependent hydrolases"/>
    <property type="match status" value="1"/>
</dbReference>